<organism>
    <name type="scientific">Clostridium botulinum (strain Loch Maree / Type A3)</name>
    <dbReference type="NCBI Taxonomy" id="498214"/>
    <lineage>
        <taxon>Bacteria</taxon>
        <taxon>Bacillati</taxon>
        <taxon>Bacillota</taxon>
        <taxon>Clostridia</taxon>
        <taxon>Eubacteriales</taxon>
        <taxon>Clostridiaceae</taxon>
        <taxon>Clostridium</taxon>
    </lineage>
</organism>
<protein>
    <recommendedName>
        <fullName evidence="1">3-methyl-2-oxobutanoate hydroxymethyltransferase</fullName>
        <ecNumber evidence="1">2.1.2.11</ecNumber>
    </recommendedName>
    <alternativeName>
        <fullName evidence="1">Ketopantoate hydroxymethyltransferase</fullName>
        <shortName evidence="1">KPHMT</shortName>
    </alternativeName>
</protein>
<dbReference type="EC" id="2.1.2.11" evidence="1"/>
<dbReference type="EMBL" id="CP000962">
    <property type="protein sequence ID" value="ACA56563.1"/>
    <property type="molecule type" value="Genomic_DNA"/>
</dbReference>
<dbReference type="RefSeq" id="WP_012344416.1">
    <property type="nucleotide sequence ID" value="NC_010520.1"/>
</dbReference>
<dbReference type="SMR" id="B1KUY7"/>
<dbReference type="KEGG" id="cbl:CLK_3627"/>
<dbReference type="HOGENOM" id="CLU_036645_1_0_9"/>
<dbReference type="UniPathway" id="UPA00028">
    <property type="reaction ID" value="UER00003"/>
</dbReference>
<dbReference type="GO" id="GO:0005737">
    <property type="term" value="C:cytoplasm"/>
    <property type="evidence" value="ECO:0007669"/>
    <property type="project" value="UniProtKB-SubCell"/>
</dbReference>
<dbReference type="GO" id="GO:0003864">
    <property type="term" value="F:3-methyl-2-oxobutanoate hydroxymethyltransferase activity"/>
    <property type="evidence" value="ECO:0007669"/>
    <property type="project" value="UniProtKB-UniRule"/>
</dbReference>
<dbReference type="GO" id="GO:0000287">
    <property type="term" value="F:magnesium ion binding"/>
    <property type="evidence" value="ECO:0007669"/>
    <property type="project" value="TreeGrafter"/>
</dbReference>
<dbReference type="GO" id="GO:0015940">
    <property type="term" value="P:pantothenate biosynthetic process"/>
    <property type="evidence" value="ECO:0007669"/>
    <property type="project" value="UniProtKB-UniRule"/>
</dbReference>
<dbReference type="CDD" id="cd06557">
    <property type="entry name" value="KPHMT-like"/>
    <property type="match status" value="1"/>
</dbReference>
<dbReference type="FunFam" id="3.20.20.60:FF:000003">
    <property type="entry name" value="3-methyl-2-oxobutanoate hydroxymethyltransferase"/>
    <property type="match status" value="1"/>
</dbReference>
<dbReference type="Gene3D" id="3.20.20.60">
    <property type="entry name" value="Phosphoenolpyruvate-binding domains"/>
    <property type="match status" value="1"/>
</dbReference>
<dbReference type="HAMAP" id="MF_00156">
    <property type="entry name" value="PanB"/>
    <property type="match status" value="1"/>
</dbReference>
<dbReference type="InterPro" id="IPR003700">
    <property type="entry name" value="Pantoate_hydroxy_MeTrfase"/>
</dbReference>
<dbReference type="InterPro" id="IPR015813">
    <property type="entry name" value="Pyrv/PenolPyrv_kinase-like_dom"/>
</dbReference>
<dbReference type="InterPro" id="IPR040442">
    <property type="entry name" value="Pyrv_kinase-like_dom_sf"/>
</dbReference>
<dbReference type="NCBIfam" id="TIGR00222">
    <property type="entry name" value="panB"/>
    <property type="match status" value="1"/>
</dbReference>
<dbReference type="NCBIfam" id="NF001452">
    <property type="entry name" value="PRK00311.1"/>
    <property type="match status" value="1"/>
</dbReference>
<dbReference type="PANTHER" id="PTHR20881">
    <property type="entry name" value="3-METHYL-2-OXOBUTANOATE HYDROXYMETHYLTRANSFERASE"/>
    <property type="match status" value="1"/>
</dbReference>
<dbReference type="PANTHER" id="PTHR20881:SF0">
    <property type="entry name" value="3-METHYL-2-OXOBUTANOATE HYDROXYMETHYLTRANSFERASE"/>
    <property type="match status" value="1"/>
</dbReference>
<dbReference type="Pfam" id="PF02548">
    <property type="entry name" value="Pantoate_transf"/>
    <property type="match status" value="1"/>
</dbReference>
<dbReference type="PIRSF" id="PIRSF000388">
    <property type="entry name" value="Pantoate_hydroxy_MeTrfase"/>
    <property type="match status" value="1"/>
</dbReference>
<dbReference type="SUPFAM" id="SSF51621">
    <property type="entry name" value="Phosphoenolpyruvate/pyruvate domain"/>
    <property type="match status" value="1"/>
</dbReference>
<gene>
    <name evidence="1" type="primary">panB</name>
    <name type="ordered locus">CLK_3627</name>
</gene>
<name>PANB_CLOBM</name>
<reference key="1">
    <citation type="journal article" date="2007" name="PLoS ONE">
        <title>Analysis of the neurotoxin complex genes in Clostridium botulinum A1-A4 and B1 strains: BoNT/A3, /Ba4 and /B1 clusters are located within plasmids.</title>
        <authorList>
            <person name="Smith T.J."/>
            <person name="Hill K.K."/>
            <person name="Foley B.T."/>
            <person name="Detter J.C."/>
            <person name="Munk A.C."/>
            <person name="Bruce D.C."/>
            <person name="Doggett N.A."/>
            <person name="Smith L.A."/>
            <person name="Marks J.D."/>
            <person name="Xie G."/>
            <person name="Brettin T.S."/>
        </authorList>
    </citation>
    <scope>NUCLEOTIDE SEQUENCE [LARGE SCALE GENOMIC DNA]</scope>
    <source>
        <strain>Loch Maree / Type A3</strain>
    </source>
</reference>
<comment type="function">
    <text evidence="1">Catalyzes the reversible reaction in which hydroxymethyl group from 5,10-methylenetetrahydrofolate is transferred onto alpha-ketoisovalerate to form ketopantoate.</text>
</comment>
<comment type="catalytic activity">
    <reaction evidence="1">
        <text>3-methyl-2-oxobutanoate + (6R)-5,10-methylene-5,6,7,8-tetrahydrofolate + H2O = 2-dehydropantoate + (6S)-5,6,7,8-tetrahydrofolate</text>
        <dbReference type="Rhea" id="RHEA:11824"/>
        <dbReference type="ChEBI" id="CHEBI:11561"/>
        <dbReference type="ChEBI" id="CHEBI:11851"/>
        <dbReference type="ChEBI" id="CHEBI:15377"/>
        <dbReference type="ChEBI" id="CHEBI:15636"/>
        <dbReference type="ChEBI" id="CHEBI:57453"/>
        <dbReference type="EC" id="2.1.2.11"/>
    </reaction>
</comment>
<comment type="cofactor">
    <cofactor evidence="1">
        <name>Mg(2+)</name>
        <dbReference type="ChEBI" id="CHEBI:18420"/>
    </cofactor>
    <text evidence="1">Binds 1 Mg(2+) ion per subunit.</text>
</comment>
<comment type="pathway">
    <text evidence="1">Cofactor biosynthesis; (R)-pantothenate biosynthesis; (R)-pantoate from 3-methyl-2-oxobutanoate: step 1/2.</text>
</comment>
<comment type="subunit">
    <text evidence="1">Homodecamer; pentamer of dimers.</text>
</comment>
<comment type="subcellular location">
    <subcellularLocation>
        <location evidence="1">Cytoplasm</location>
    </subcellularLocation>
</comment>
<comment type="similarity">
    <text evidence="1">Belongs to the PanB family.</text>
</comment>
<keyword id="KW-0963">Cytoplasm</keyword>
<keyword id="KW-0460">Magnesium</keyword>
<keyword id="KW-0479">Metal-binding</keyword>
<keyword id="KW-0566">Pantothenate biosynthesis</keyword>
<keyword id="KW-0808">Transferase</keyword>
<accession>B1KUY7</accession>
<sequence length="275" mass="30002">MRNTVSTFQELKNKGEKITMLTAYDYSMAKLIDSSGINGILVGDSLGMVCLGYENTLSVTMEDMLHHTKAVVRGTSNALVVGDMPFMSYQTSIYDAVYNAGRFIKEAGAHAVKLEGGATVAEEIKAIVKAQIPVMGHIGLTPQSVNMFGGFKVQGKNEKVAKKLIEDAKILEEAGAFAIVLECIPEKLSKIISESISIPTIGIGAGKYCDGQILVYQDMLSMFSDFKPKFVKSFGSIGESIKDGVSQYIKEVKEAKFPEEKHAFKIDDDVINKLY</sequence>
<proteinExistence type="inferred from homology"/>
<evidence type="ECO:0000255" key="1">
    <source>
        <dbReference type="HAMAP-Rule" id="MF_00156"/>
    </source>
</evidence>
<feature type="chain" id="PRO_1000096955" description="3-methyl-2-oxobutanoate hydroxymethyltransferase">
    <location>
        <begin position="1"/>
        <end position="275"/>
    </location>
</feature>
<feature type="active site" description="Proton acceptor" evidence="1">
    <location>
        <position position="182"/>
    </location>
</feature>
<feature type="binding site" evidence="1">
    <location>
        <begin position="44"/>
        <end position="45"/>
    </location>
    <ligand>
        <name>3-methyl-2-oxobutanoate</name>
        <dbReference type="ChEBI" id="CHEBI:11851"/>
    </ligand>
</feature>
<feature type="binding site" evidence="1">
    <location>
        <position position="44"/>
    </location>
    <ligand>
        <name>Mg(2+)</name>
        <dbReference type="ChEBI" id="CHEBI:18420"/>
    </ligand>
</feature>
<feature type="binding site" evidence="1">
    <location>
        <position position="83"/>
    </location>
    <ligand>
        <name>3-methyl-2-oxobutanoate</name>
        <dbReference type="ChEBI" id="CHEBI:11851"/>
    </ligand>
</feature>
<feature type="binding site" evidence="1">
    <location>
        <position position="83"/>
    </location>
    <ligand>
        <name>Mg(2+)</name>
        <dbReference type="ChEBI" id="CHEBI:18420"/>
    </ligand>
</feature>
<feature type="binding site" evidence="1">
    <location>
        <position position="113"/>
    </location>
    <ligand>
        <name>3-methyl-2-oxobutanoate</name>
        <dbReference type="ChEBI" id="CHEBI:11851"/>
    </ligand>
</feature>
<feature type="binding site" evidence="1">
    <location>
        <position position="115"/>
    </location>
    <ligand>
        <name>Mg(2+)</name>
        <dbReference type="ChEBI" id="CHEBI:18420"/>
    </ligand>
</feature>